<protein>
    <recommendedName>
        <fullName>Uncharacterized protein YffO</fullName>
    </recommendedName>
</protein>
<accession>P76546</accession>
<name>YFFO_ECOLI</name>
<dbReference type="EMBL" id="U00096">
    <property type="protein sequence ID" value="AAC75499.1"/>
    <property type="molecule type" value="Genomic_DNA"/>
</dbReference>
<dbReference type="PIR" id="E65019">
    <property type="entry name" value="E65019"/>
</dbReference>
<dbReference type="RefSeq" id="NP_416941.1">
    <property type="nucleotide sequence ID" value="NC_000913.3"/>
</dbReference>
<dbReference type="RefSeq" id="WP_000398186.1">
    <property type="nucleotide sequence ID" value="NZ_JACEFS010000004.1"/>
</dbReference>
<dbReference type="SMR" id="P76546"/>
<dbReference type="FunCoup" id="P76546">
    <property type="interactions" value="13"/>
</dbReference>
<dbReference type="STRING" id="511145.b2446"/>
<dbReference type="PaxDb" id="511145-b2446"/>
<dbReference type="DNASU" id="946929"/>
<dbReference type="EnsemblBacteria" id="AAC75499">
    <property type="protein sequence ID" value="AAC75499"/>
    <property type="gene ID" value="b2446"/>
</dbReference>
<dbReference type="GeneID" id="946929"/>
<dbReference type="KEGG" id="eco:b2446"/>
<dbReference type="KEGG" id="ecoc:C3026_13580"/>
<dbReference type="PATRIC" id="fig|511145.12.peg.2539"/>
<dbReference type="EchoBASE" id="EB3928"/>
<dbReference type="InParanoid" id="P76546"/>
<dbReference type="BioCyc" id="EcoCyc:G7276-MONOMER"/>
<dbReference type="PRO" id="PR:P76546"/>
<dbReference type="Proteomes" id="UP000000625">
    <property type="component" value="Chromosome"/>
</dbReference>
<dbReference type="Gene3D" id="1.10.10.60">
    <property type="entry name" value="Homeodomain-like"/>
    <property type="match status" value="1"/>
</dbReference>
<dbReference type="InterPro" id="IPR048683">
    <property type="entry name" value="Sf6_terminase"/>
</dbReference>
<dbReference type="Pfam" id="PF20901">
    <property type="entry name" value="Sf6_terminase"/>
    <property type="match status" value="1"/>
</dbReference>
<proteinExistence type="predicted"/>
<organism>
    <name type="scientific">Escherichia coli (strain K12)</name>
    <dbReference type="NCBI Taxonomy" id="83333"/>
    <lineage>
        <taxon>Bacteria</taxon>
        <taxon>Pseudomonadati</taxon>
        <taxon>Pseudomonadota</taxon>
        <taxon>Gammaproteobacteria</taxon>
        <taxon>Enterobacterales</taxon>
        <taxon>Enterobacteriaceae</taxon>
        <taxon>Escherichia</taxon>
    </lineage>
</organism>
<reference key="1">
    <citation type="journal article" date="1997" name="Science">
        <title>The complete genome sequence of Escherichia coli K-12.</title>
        <authorList>
            <person name="Blattner F.R."/>
            <person name="Plunkett G. III"/>
            <person name="Bloch C.A."/>
            <person name="Perna N.T."/>
            <person name="Burland V."/>
            <person name="Riley M."/>
            <person name="Collado-Vides J."/>
            <person name="Glasner J.D."/>
            <person name="Rode C.K."/>
            <person name="Mayhew G.F."/>
            <person name="Gregor J."/>
            <person name="Davis N.W."/>
            <person name="Kirkpatrick H.A."/>
            <person name="Goeden M.A."/>
            <person name="Rose D.J."/>
            <person name="Mau B."/>
            <person name="Shao Y."/>
        </authorList>
    </citation>
    <scope>NUCLEOTIDE SEQUENCE [LARGE SCALE GENOMIC DNA]</scope>
    <source>
        <strain>K12 / MG1655 / ATCC 47076</strain>
    </source>
</reference>
<feature type="chain" id="PRO_0000169235" description="Uncharacterized protein YffO">
    <location>
        <begin position="1"/>
        <end position="138"/>
    </location>
</feature>
<feature type="region of interest" description="Disordered" evidence="1">
    <location>
        <begin position="1"/>
        <end position="27"/>
    </location>
</feature>
<gene>
    <name type="primary">yffO</name>
    <name type="ordered locus">b2446</name>
</gene>
<evidence type="ECO:0000256" key="1">
    <source>
        <dbReference type="SAM" id="MobiDB-lite"/>
    </source>
</evidence>
<sequence>MEGELIENNGLDIYDTSETPKKRGRPAKYNEKIATQIVLLVSEGYSLRKISMMPGMPSHRQMMRWQLEHMDFREGIAWMSWLWCAEAGRRAVEIIDEVDINAEDGPKQLRKAEAKAKALLAAAKLNSLKHSPFGDDKQ</sequence>
<keyword id="KW-1185">Reference proteome</keyword>